<sequence length="431" mass="45648">MSLDKSKHEKYVQILREELVPALGCTEPIAIAYTAANLRKIMGGIPDEILIESSGNIIKNAKSVIVPNTGGMKGMEASALIGLIGGNADKGLEVLADVTEEHVKLAHEYLAKSCTKLKLMDTPASLHIRITGKLNGDTGVAELIHQHTNIVLLKKNDEIIFEKPFSLESAAGALTDRTCLNVKDILDFADTVPVDEVSPIIMRQVEYNMRVSEDGLKTSYGIETGKNILKYNQKKGDDFSVKVQAEGEVAAASDARMCGCSYPVITNSGSGNQGLAVSVPVVVYARENKISEEKLIRCLIVSNLLAIHQKTGIGRLSAYCGAVTAGAACAAAITYMKGGSYEQVCGTIVNTLGTVSGILCDGAKQSCAAKIASALDSALFSHELAMDGNFFAGGDGIVKDDIEKTIAGIGVVAAQGMHKTDEVVLQVMLKD</sequence>
<keyword id="KW-1185">Reference proteome</keyword>
<protein>
    <recommendedName>
        <fullName evidence="1">UPF0597 protein TDE_2144</fullName>
    </recommendedName>
</protein>
<comment type="similarity">
    <text evidence="1">Belongs to the UPF0597 family.</text>
</comment>
<name>Y2144_TREDE</name>
<reference key="1">
    <citation type="journal article" date="2004" name="Proc. Natl. Acad. Sci. U.S.A.">
        <title>Comparison of the genome of the oral pathogen Treponema denticola with other spirochete genomes.</title>
        <authorList>
            <person name="Seshadri R."/>
            <person name="Myers G.S.A."/>
            <person name="Tettelin H."/>
            <person name="Eisen J.A."/>
            <person name="Heidelberg J.F."/>
            <person name="Dodson R.J."/>
            <person name="Davidsen T.M."/>
            <person name="DeBoy R.T."/>
            <person name="Fouts D.E."/>
            <person name="Haft D.H."/>
            <person name="Selengut J."/>
            <person name="Ren Q."/>
            <person name="Brinkac L.M."/>
            <person name="Madupu R."/>
            <person name="Kolonay J.F."/>
            <person name="Durkin S.A."/>
            <person name="Daugherty S.C."/>
            <person name="Shetty J."/>
            <person name="Shvartsbeyn A."/>
            <person name="Gebregeorgis E."/>
            <person name="Geer K."/>
            <person name="Tsegaye G."/>
            <person name="Malek J.A."/>
            <person name="Ayodeji B."/>
            <person name="Shatsman S."/>
            <person name="McLeod M.P."/>
            <person name="Smajs D."/>
            <person name="Howell J.K."/>
            <person name="Pal S."/>
            <person name="Amin A."/>
            <person name="Vashisth P."/>
            <person name="McNeill T.Z."/>
            <person name="Xiang Q."/>
            <person name="Sodergren E."/>
            <person name="Baca E."/>
            <person name="Weinstock G.M."/>
            <person name="Norris S.J."/>
            <person name="Fraser C.M."/>
            <person name="Paulsen I.T."/>
        </authorList>
    </citation>
    <scope>NUCLEOTIDE SEQUENCE [LARGE SCALE GENOMIC DNA]</scope>
    <source>
        <strain>ATCC 35405 / DSM 14222 / CIP 103919 / JCM 8153 / KCTC 15104</strain>
    </source>
</reference>
<accession>Q73KS3</accession>
<evidence type="ECO:0000255" key="1">
    <source>
        <dbReference type="HAMAP-Rule" id="MF_01845"/>
    </source>
</evidence>
<dbReference type="EMBL" id="AE017226">
    <property type="protein sequence ID" value="AAS12664.1"/>
    <property type="molecule type" value="Genomic_DNA"/>
</dbReference>
<dbReference type="RefSeq" id="NP_972745.1">
    <property type="nucleotide sequence ID" value="NC_002967.9"/>
</dbReference>
<dbReference type="RefSeq" id="WP_002679977.1">
    <property type="nucleotide sequence ID" value="NC_002967.9"/>
</dbReference>
<dbReference type="PaxDb" id="243275-TDE_2144"/>
<dbReference type="GeneID" id="2739130"/>
<dbReference type="KEGG" id="tde:TDE_2144"/>
<dbReference type="PATRIC" id="fig|243275.7.peg.2025"/>
<dbReference type="eggNOG" id="COG3681">
    <property type="taxonomic scope" value="Bacteria"/>
</dbReference>
<dbReference type="HOGENOM" id="CLU_051840_0_0_12"/>
<dbReference type="OrthoDB" id="41906at2"/>
<dbReference type="Proteomes" id="UP000008212">
    <property type="component" value="Chromosome"/>
</dbReference>
<dbReference type="GO" id="GO:0080146">
    <property type="term" value="F:L-cysteine desulfhydrase activity"/>
    <property type="evidence" value="ECO:0007669"/>
    <property type="project" value="TreeGrafter"/>
</dbReference>
<dbReference type="GO" id="GO:0019450">
    <property type="term" value="P:L-cysteine catabolic process to pyruvate"/>
    <property type="evidence" value="ECO:0007669"/>
    <property type="project" value="TreeGrafter"/>
</dbReference>
<dbReference type="HAMAP" id="MF_01845">
    <property type="entry name" value="UPF0597"/>
    <property type="match status" value="1"/>
</dbReference>
<dbReference type="InterPro" id="IPR005130">
    <property type="entry name" value="Ser_deHydtase-like_asu"/>
</dbReference>
<dbReference type="InterPro" id="IPR021144">
    <property type="entry name" value="UPF0597"/>
</dbReference>
<dbReference type="PANTHER" id="PTHR30501">
    <property type="entry name" value="UPF0597 PROTEIN YHAM"/>
    <property type="match status" value="1"/>
</dbReference>
<dbReference type="PANTHER" id="PTHR30501:SF2">
    <property type="entry name" value="UPF0597 PROTEIN YHAM"/>
    <property type="match status" value="1"/>
</dbReference>
<dbReference type="Pfam" id="PF03313">
    <property type="entry name" value="SDH_alpha"/>
    <property type="match status" value="1"/>
</dbReference>
<dbReference type="PIRSF" id="PIRSF006054">
    <property type="entry name" value="UCP006054"/>
    <property type="match status" value="1"/>
</dbReference>
<gene>
    <name type="ordered locus">TDE_2144</name>
</gene>
<proteinExistence type="inferred from homology"/>
<feature type="chain" id="PRO_0000339864" description="UPF0597 protein TDE_2144">
    <location>
        <begin position="1"/>
        <end position="431"/>
    </location>
</feature>
<organism>
    <name type="scientific">Treponema denticola (strain ATCC 35405 / DSM 14222 / CIP 103919 / JCM 8153 / KCTC 15104)</name>
    <dbReference type="NCBI Taxonomy" id="243275"/>
    <lineage>
        <taxon>Bacteria</taxon>
        <taxon>Pseudomonadati</taxon>
        <taxon>Spirochaetota</taxon>
        <taxon>Spirochaetia</taxon>
        <taxon>Spirochaetales</taxon>
        <taxon>Treponemataceae</taxon>
        <taxon>Treponema</taxon>
    </lineage>
</organism>